<protein>
    <recommendedName>
        <fullName evidence="1">NADH-quinone oxidoreductase subunit B</fullName>
        <ecNumber evidence="1">7.1.1.-</ecNumber>
    </recommendedName>
    <alternativeName>
        <fullName evidence="1">NADH dehydrogenase I subunit B</fullName>
    </alternativeName>
    <alternativeName>
        <fullName evidence="1">NDH-1 subunit B</fullName>
    </alternativeName>
</protein>
<evidence type="ECO:0000255" key="1">
    <source>
        <dbReference type="HAMAP-Rule" id="MF_01356"/>
    </source>
</evidence>
<reference key="1">
    <citation type="journal article" date="2005" name="Science">
        <title>Extensive DNA inversions in the B. fragilis genome control variable gene expression.</title>
        <authorList>
            <person name="Cerdeno-Tarraga A.-M."/>
            <person name="Patrick S."/>
            <person name="Crossman L.C."/>
            <person name="Blakely G."/>
            <person name="Abratt V."/>
            <person name="Lennard N."/>
            <person name="Poxton I."/>
            <person name="Duerden B."/>
            <person name="Harris B."/>
            <person name="Quail M.A."/>
            <person name="Barron A."/>
            <person name="Clark L."/>
            <person name="Corton C."/>
            <person name="Doggett J."/>
            <person name="Holden M.T.G."/>
            <person name="Larke N."/>
            <person name="Line A."/>
            <person name="Lord A."/>
            <person name="Norbertczak H."/>
            <person name="Ormond D."/>
            <person name="Price C."/>
            <person name="Rabbinowitsch E."/>
            <person name="Woodward J."/>
            <person name="Barrell B.G."/>
            <person name="Parkhill J."/>
        </authorList>
    </citation>
    <scope>NUCLEOTIDE SEQUENCE [LARGE SCALE GENOMIC DNA]</scope>
    <source>
        <strain>ATCC 25285 / DSM 2151 / CCUG 4856 / JCM 11019 / LMG 10263 / NCTC 9343 / Onslow / VPI 2553 / EN-2</strain>
    </source>
</reference>
<accession>Q5LH49</accession>
<name>NUOB_BACFN</name>
<feature type="chain" id="PRO_0000376141" description="NADH-quinone oxidoreductase subunit B">
    <location>
        <begin position="1"/>
        <end position="196"/>
    </location>
</feature>
<feature type="binding site" evidence="1">
    <location>
        <position position="63"/>
    </location>
    <ligand>
        <name>[4Fe-4S] cluster</name>
        <dbReference type="ChEBI" id="CHEBI:49883"/>
    </ligand>
</feature>
<feature type="binding site" evidence="1">
    <location>
        <position position="64"/>
    </location>
    <ligand>
        <name>[4Fe-4S] cluster</name>
        <dbReference type="ChEBI" id="CHEBI:49883"/>
    </ligand>
</feature>
<feature type="binding site" evidence="1">
    <location>
        <position position="129"/>
    </location>
    <ligand>
        <name>[4Fe-4S] cluster</name>
        <dbReference type="ChEBI" id="CHEBI:49883"/>
    </ligand>
</feature>
<feature type="binding site" evidence="1">
    <location>
        <position position="159"/>
    </location>
    <ligand>
        <name>[4Fe-4S] cluster</name>
        <dbReference type="ChEBI" id="CHEBI:49883"/>
    </ligand>
</feature>
<keyword id="KW-0004">4Fe-4S</keyword>
<keyword id="KW-0997">Cell inner membrane</keyword>
<keyword id="KW-1003">Cell membrane</keyword>
<keyword id="KW-0408">Iron</keyword>
<keyword id="KW-0411">Iron-sulfur</keyword>
<keyword id="KW-0472">Membrane</keyword>
<keyword id="KW-0479">Metal-binding</keyword>
<keyword id="KW-0520">NAD</keyword>
<keyword id="KW-0874">Quinone</keyword>
<keyword id="KW-1278">Translocase</keyword>
<keyword id="KW-0813">Transport</keyword>
<sequence>MEIMKKPKIKSIPYEDFIDNESLEKMVKELNEGGANVFVGVLDDLINWGRSNSLWPLTFATSCCGIEFMALGAARYDMARFGFEVARASPRQADMIMVCGTITNKMAPVLKRLYDQMADPKYVIAVGGCAVSGGPFRKSYHVVNGVDKILPVDVYIPGCPPRPEAFYYGMMQLQRKVKIEKFFGGVNRKEKKPEGK</sequence>
<gene>
    <name evidence="1" type="primary">nuoB</name>
    <name type="ordered locus">BF0791</name>
</gene>
<dbReference type="EC" id="7.1.1.-" evidence="1"/>
<dbReference type="EMBL" id="CR626927">
    <property type="protein sequence ID" value="CAH06537.1"/>
    <property type="molecule type" value="Genomic_DNA"/>
</dbReference>
<dbReference type="RefSeq" id="WP_008769486.1">
    <property type="nucleotide sequence ID" value="NZ_UFTH01000001.1"/>
</dbReference>
<dbReference type="SMR" id="Q5LH49"/>
<dbReference type="PaxDb" id="272559-BF9343_0756"/>
<dbReference type="KEGG" id="bfs:BF9343_0756"/>
<dbReference type="eggNOG" id="COG0377">
    <property type="taxonomic scope" value="Bacteria"/>
</dbReference>
<dbReference type="HOGENOM" id="CLU_055737_7_2_10"/>
<dbReference type="Proteomes" id="UP000006731">
    <property type="component" value="Chromosome"/>
</dbReference>
<dbReference type="GO" id="GO:0005886">
    <property type="term" value="C:plasma membrane"/>
    <property type="evidence" value="ECO:0007669"/>
    <property type="project" value="UniProtKB-SubCell"/>
</dbReference>
<dbReference type="GO" id="GO:0045271">
    <property type="term" value="C:respiratory chain complex I"/>
    <property type="evidence" value="ECO:0007669"/>
    <property type="project" value="TreeGrafter"/>
</dbReference>
<dbReference type="GO" id="GO:0051539">
    <property type="term" value="F:4 iron, 4 sulfur cluster binding"/>
    <property type="evidence" value="ECO:0007669"/>
    <property type="project" value="UniProtKB-KW"/>
</dbReference>
<dbReference type="GO" id="GO:0005506">
    <property type="term" value="F:iron ion binding"/>
    <property type="evidence" value="ECO:0007669"/>
    <property type="project" value="UniProtKB-UniRule"/>
</dbReference>
<dbReference type="GO" id="GO:0008137">
    <property type="term" value="F:NADH dehydrogenase (ubiquinone) activity"/>
    <property type="evidence" value="ECO:0007669"/>
    <property type="project" value="InterPro"/>
</dbReference>
<dbReference type="GO" id="GO:0050136">
    <property type="term" value="F:NADH:ubiquinone reductase (non-electrogenic) activity"/>
    <property type="evidence" value="ECO:0007669"/>
    <property type="project" value="UniProtKB-UniRule"/>
</dbReference>
<dbReference type="GO" id="GO:0048038">
    <property type="term" value="F:quinone binding"/>
    <property type="evidence" value="ECO:0007669"/>
    <property type="project" value="UniProtKB-KW"/>
</dbReference>
<dbReference type="GO" id="GO:0009060">
    <property type="term" value="P:aerobic respiration"/>
    <property type="evidence" value="ECO:0007669"/>
    <property type="project" value="TreeGrafter"/>
</dbReference>
<dbReference type="GO" id="GO:0015990">
    <property type="term" value="P:electron transport coupled proton transport"/>
    <property type="evidence" value="ECO:0007669"/>
    <property type="project" value="TreeGrafter"/>
</dbReference>
<dbReference type="FunFam" id="3.40.50.12280:FF:000002">
    <property type="entry name" value="NADH-quinone oxidoreductase subunit B"/>
    <property type="match status" value="1"/>
</dbReference>
<dbReference type="Gene3D" id="3.40.50.12280">
    <property type="match status" value="1"/>
</dbReference>
<dbReference type="HAMAP" id="MF_01356">
    <property type="entry name" value="NDH1_NuoB"/>
    <property type="match status" value="1"/>
</dbReference>
<dbReference type="InterPro" id="IPR006137">
    <property type="entry name" value="NADH_UbQ_OxRdtase-like_20kDa"/>
</dbReference>
<dbReference type="InterPro" id="IPR006138">
    <property type="entry name" value="NADH_UQ_OxRdtase_20Kd_su"/>
</dbReference>
<dbReference type="NCBIfam" id="TIGR01957">
    <property type="entry name" value="nuoB_fam"/>
    <property type="match status" value="1"/>
</dbReference>
<dbReference type="NCBIfam" id="NF005012">
    <property type="entry name" value="PRK06411.1"/>
    <property type="match status" value="1"/>
</dbReference>
<dbReference type="NCBIfam" id="NF011391">
    <property type="entry name" value="PRK14816.1"/>
    <property type="match status" value="1"/>
</dbReference>
<dbReference type="PANTHER" id="PTHR11995">
    <property type="entry name" value="NADH DEHYDROGENASE"/>
    <property type="match status" value="1"/>
</dbReference>
<dbReference type="PANTHER" id="PTHR11995:SF14">
    <property type="entry name" value="NADH DEHYDROGENASE [UBIQUINONE] IRON-SULFUR PROTEIN 7, MITOCHONDRIAL"/>
    <property type="match status" value="1"/>
</dbReference>
<dbReference type="Pfam" id="PF01058">
    <property type="entry name" value="Oxidored_q6"/>
    <property type="match status" value="1"/>
</dbReference>
<dbReference type="SUPFAM" id="SSF56770">
    <property type="entry name" value="HydA/Nqo6-like"/>
    <property type="match status" value="1"/>
</dbReference>
<dbReference type="PROSITE" id="PS01150">
    <property type="entry name" value="COMPLEX1_20K"/>
    <property type="match status" value="1"/>
</dbReference>
<organism>
    <name type="scientific">Bacteroides fragilis (strain ATCC 25285 / DSM 2151 / CCUG 4856 / JCM 11019 / LMG 10263 / NCTC 9343 / Onslow / VPI 2553 / EN-2)</name>
    <dbReference type="NCBI Taxonomy" id="272559"/>
    <lineage>
        <taxon>Bacteria</taxon>
        <taxon>Pseudomonadati</taxon>
        <taxon>Bacteroidota</taxon>
        <taxon>Bacteroidia</taxon>
        <taxon>Bacteroidales</taxon>
        <taxon>Bacteroidaceae</taxon>
        <taxon>Bacteroides</taxon>
    </lineage>
</organism>
<comment type="function">
    <text evidence="1">NDH-1 shuttles electrons from NADH, via FMN and iron-sulfur (Fe-S) centers, to quinones in the respiratory chain. The immediate electron acceptor for the enzyme in this species is believed to be a menaquinone. Couples the redox reaction to proton translocation (for every two electrons transferred, four hydrogen ions are translocated across the cytoplasmic membrane), and thus conserves the redox energy in a proton gradient.</text>
</comment>
<comment type="catalytic activity">
    <reaction evidence="1">
        <text>a quinone + NADH + 5 H(+)(in) = a quinol + NAD(+) + 4 H(+)(out)</text>
        <dbReference type="Rhea" id="RHEA:57888"/>
        <dbReference type="ChEBI" id="CHEBI:15378"/>
        <dbReference type="ChEBI" id="CHEBI:24646"/>
        <dbReference type="ChEBI" id="CHEBI:57540"/>
        <dbReference type="ChEBI" id="CHEBI:57945"/>
        <dbReference type="ChEBI" id="CHEBI:132124"/>
    </reaction>
</comment>
<comment type="cofactor">
    <cofactor evidence="1">
        <name>[4Fe-4S] cluster</name>
        <dbReference type="ChEBI" id="CHEBI:49883"/>
    </cofactor>
    <text evidence="1">Binds 1 [4Fe-4S] cluster.</text>
</comment>
<comment type="subunit">
    <text evidence="1">NDH-1 is composed of 14 different subunits. Subunits NuoB, C, D, E, F, and G constitute the peripheral sector of the complex.</text>
</comment>
<comment type="subcellular location">
    <subcellularLocation>
        <location evidence="1">Cell inner membrane</location>
        <topology evidence="1">Peripheral membrane protein</topology>
        <orientation evidence="1">Cytoplasmic side</orientation>
    </subcellularLocation>
</comment>
<comment type="similarity">
    <text evidence="1">Belongs to the complex I 20 kDa subunit family.</text>
</comment>
<proteinExistence type="inferred from homology"/>